<gene>
    <name type="primary">AIM6</name>
    <name type="ORF">AWRI1631_40100</name>
</gene>
<name>AIM6_YEAS6</name>
<feature type="signal peptide" evidence="1">
    <location>
        <begin position="1"/>
        <end position="26"/>
    </location>
</feature>
<feature type="chain" id="PRO_0000408711" description="Altered inheritance of mitochondria protein 6">
    <location>
        <begin position="27"/>
        <end position="390"/>
    </location>
</feature>
<reference key="1">
    <citation type="journal article" date="2008" name="FEMS Yeast Res.">
        <title>Comparative genome analysis of a Saccharomyces cerevisiae wine strain.</title>
        <authorList>
            <person name="Borneman A.R."/>
            <person name="Forgan A.H."/>
            <person name="Pretorius I.S."/>
            <person name="Chambers P.J."/>
        </authorList>
    </citation>
    <scope>NUCLEOTIDE SEQUENCE [LARGE SCALE GENOMIC DNA]</scope>
    <source>
        <strain>AWRI1631</strain>
    </source>
</reference>
<organism>
    <name type="scientific">Saccharomyces cerevisiae (strain AWRI1631)</name>
    <name type="common">Baker's yeast</name>
    <dbReference type="NCBI Taxonomy" id="545124"/>
    <lineage>
        <taxon>Eukaryota</taxon>
        <taxon>Fungi</taxon>
        <taxon>Dikarya</taxon>
        <taxon>Ascomycota</taxon>
        <taxon>Saccharomycotina</taxon>
        <taxon>Saccharomycetes</taxon>
        <taxon>Saccharomycetales</taxon>
        <taxon>Saccharomycetaceae</taxon>
        <taxon>Saccharomyces</taxon>
    </lineage>
</organism>
<accession>B5VF44</accession>
<protein>
    <recommendedName>
        <fullName>Altered inheritance of mitochondria protein 6</fullName>
    </recommendedName>
</protein>
<proteinExistence type="inferred from homology"/>
<keyword id="KW-0732">Signal</keyword>
<sequence>MLGLKGCLTILIGYVIAVCALFSSRGRNPSLTDWEKLKDQKISNIDNFGLTGQHLLAFFQENLPFLSFSEEKYRHKHVSLYYDVFKEYILRRASSKKCLPVDSAIAKLNKDVNPMPVHSHNDYWRKLPLFEGLAYGASSTEADVWNIDEKILAVGHNEAYLDPVELTLDKLYTGPLLEILDEVNCQDSDSDRKNGVFFNSPETSLFFYIDFKSDDNELTYKLLMEQYFKSLIDSGYLTYYDMKKDEIIWRPVTVILTGNYPTSLDILDNGNDNGYFESSQRFAFLDAPLLSLEPKYSKLSVAATVSFSQLMKHCGSDHWKVSLRGRMDSNEISCAKSIIDGAHALKLKTRIWGAPTWPANLVETISRQIIHDLGSDLLNLDNLFMASSLI</sequence>
<dbReference type="EMBL" id="ABSV01000298">
    <property type="protein sequence ID" value="EDZ73451.1"/>
    <property type="molecule type" value="Genomic_DNA"/>
</dbReference>
<dbReference type="Proteomes" id="UP000008988">
    <property type="component" value="Unassembled WGS sequence"/>
</dbReference>
<dbReference type="GO" id="GO:0008081">
    <property type="term" value="F:phosphoric diester hydrolase activity"/>
    <property type="evidence" value="ECO:0007669"/>
    <property type="project" value="InterPro"/>
</dbReference>
<dbReference type="GO" id="GO:0006629">
    <property type="term" value="P:lipid metabolic process"/>
    <property type="evidence" value="ECO:0007669"/>
    <property type="project" value="InterPro"/>
</dbReference>
<dbReference type="CDD" id="cd08577">
    <property type="entry name" value="PI-PLCc_GDPD_SF_unchar3"/>
    <property type="match status" value="1"/>
</dbReference>
<dbReference type="InterPro" id="IPR039559">
    <property type="entry name" value="AIM6_PI-PLC-like_dom"/>
</dbReference>
<dbReference type="InterPro" id="IPR051236">
    <property type="entry name" value="HAT_RTT109-like"/>
</dbReference>
<dbReference type="InterPro" id="IPR017946">
    <property type="entry name" value="PLC-like_Pdiesterase_TIM-brl"/>
</dbReference>
<dbReference type="PANTHER" id="PTHR31571">
    <property type="entry name" value="ALTERED INHERITANCE OF MITOCHONDRIA PROTEIN 6"/>
    <property type="match status" value="1"/>
</dbReference>
<dbReference type="PANTHER" id="PTHR31571:SF1">
    <property type="entry name" value="ALTERED INHERITANCE OF MITOCHONDRIA PROTEIN 6"/>
    <property type="match status" value="1"/>
</dbReference>
<dbReference type="SUPFAM" id="SSF51695">
    <property type="entry name" value="PLC-like phosphodiesterases"/>
    <property type="match status" value="1"/>
</dbReference>
<comment type="similarity">
    <text evidence="2">Belongs to the AIM6 family.</text>
</comment>
<evidence type="ECO:0000255" key="1"/>
<evidence type="ECO:0000305" key="2"/>